<dbReference type="EMBL" id="BC083645">
    <property type="protein sequence ID" value="AAH83645.1"/>
    <property type="molecule type" value="mRNA"/>
</dbReference>
<dbReference type="RefSeq" id="NP_001012204.1">
    <property type="nucleotide sequence ID" value="NM_001012204.1"/>
</dbReference>
<dbReference type="SMR" id="Q5XIN3"/>
<dbReference type="FunCoup" id="Q5XIN3">
    <property type="interactions" value="1095"/>
</dbReference>
<dbReference type="STRING" id="10116.ENSRNOP00000069939"/>
<dbReference type="iPTMnet" id="Q5XIN3"/>
<dbReference type="PhosphoSitePlus" id="Q5XIN3"/>
<dbReference type="PaxDb" id="10116-ENSRNOP00000053451"/>
<dbReference type="Ensembl" id="ENSRNOT00000056612.4">
    <property type="protein sequence ID" value="ENSRNOP00000053451.2"/>
    <property type="gene ID" value="ENSRNOG00000024468.7"/>
</dbReference>
<dbReference type="GeneID" id="363286"/>
<dbReference type="KEGG" id="rno:363286"/>
<dbReference type="UCSC" id="RGD:1309252">
    <property type="organism name" value="rat"/>
</dbReference>
<dbReference type="AGR" id="RGD:1309252"/>
<dbReference type="CTD" id="26146"/>
<dbReference type="RGD" id="1309252">
    <property type="gene designation" value="Traf3ip1"/>
</dbReference>
<dbReference type="eggNOG" id="KOG3809">
    <property type="taxonomic scope" value="Eukaryota"/>
</dbReference>
<dbReference type="GeneTree" id="ENSGT00720000108822"/>
<dbReference type="HOGENOM" id="CLU_023216_0_0_1"/>
<dbReference type="InParanoid" id="Q5XIN3"/>
<dbReference type="OrthoDB" id="10258914at2759"/>
<dbReference type="PhylomeDB" id="Q5XIN3"/>
<dbReference type="Reactome" id="R-RNO-5620924">
    <property type="pathway name" value="Intraflagellar transport"/>
</dbReference>
<dbReference type="PRO" id="PR:Q5XIN3"/>
<dbReference type="Proteomes" id="UP000002494">
    <property type="component" value="Chromosome 9"/>
</dbReference>
<dbReference type="Bgee" id="ENSRNOG00000024468">
    <property type="expression patterns" value="Expressed in testis and 18 other cell types or tissues"/>
</dbReference>
<dbReference type="ExpressionAtlas" id="Q5XIN3">
    <property type="expression patterns" value="baseline and differential"/>
</dbReference>
<dbReference type="GO" id="GO:0005930">
    <property type="term" value="C:axoneme"/>
    <property type="evidence" value="ECO:0000266"/>
    <property type="project" value="RGD"/>
</dbReference>
<dbReference type="GO" id="GO:0005813">
    <property type="term" value="C:centrosome"/>
    <property type="evidence" value="ECO:0000266"/>
    <property type="project" value="RGD"/>
</dbReference>
<dbReference type="GO" id="GO:0036064">
    <property type="term" value="C:ciliary basal body"/>
    <property type="evidence" value="ECO:0000266"/>
    <property type="project" value="RGD"/>
</dbReference>
<dbReference type="GO" id="GO:0097546">
    <property type="term" value="C:ciliary base"/>
    <property type="evidence" value="ECO:0000250"/>
    <property type="project" value="UniProtKB"/>
</dbReference>
<dbReference type="GO" id="GO:0097542">
    <property type="term" value="C:ciliary tip"/>
    <property type="evidence" value="ECO:0000250"/>
    <property type="project" value="UniProtKB"/>
</dbReference>
<dbReference type="GO" id="GO:0035869">
    <property type="term" value="C:ciliary transition zone"/>
    <property type="evidence" value="ECO:0000250"/>
    <property type="project" value="UniProtKB"/>
</dbReference>
<dbReference type="GO" id="GO:0005929">
    <property type="term" value="C:cilium"/>
    <property type="evidence" value="ECO:0000266"/>
    <property type="project" value="RGD"/>
</dbReference>
<dbReference type="GO" id="GO:0030992">
    <property type="term" value="C:intraciliary transport particle B"/>
    <property type="evidence" value="ECO:0000250"/>
    <property type="project" value="UniProtKB"/>
</dbReference>
<dbReference type="GO" id="GO:0008017">
    <property type="term" value="F:microtubule binding"/>
    <property type="evidence" value="ECO:0007669"/>
    <property type="project" value="InterPro"/>
</dbReference>
<dbReference type="GO" id="GO:0060271">
    <property type="term" value="P:cilium assembly"/>
    <property type="evidence" value="ECO:0000266"/>
    <property type="project" value="RGD"/>
</dbReference>
<dbReference type="GO" id="GO:0051607">
    <property type="term" value="P:defense response to virus"/>
    <property type="evidence" value="ECO:0000266"/>
    <property type="project" value="RGD"/>
</dbReference>
<dbReference type="GO" id="GO:0031076">
    <property type="term" value="P:embryonic camera-type eye development"/>
    <property type="evidence" value="ECO:0000266"/>
    <property type="project" value="RGD"/>
</dbReference>
<dbReference type="GO" id="GO:0042733">
    <property type="term" value="P:embryonic digit morphogenesis"/>
    <property type="evidence" value="ECO:0000266"/>
    <property type="project" value="RGD"/>
</dbReference>
<dbReference type="GO" id="GO:0035050">
    <property type="term" value="P:embryonic heart tube development"/>
    <property type="evidence" value="ECO:0000266"/>
    <property type="project" value="RGD"/>
</dbReference>
<dbReference type="GO" id="GO:0042073">
    <property type="term" value="P:intraciliary transport"/>
    <property type="evidence" value="ECO:0000318"/>
    <property type="project" value="GO_Central"/>
</dbReference>
<dbReference type="GO" id="GO:0001822">
    <property type="term" value="P:kidney development"/>
    <property type="evidence" value="ECO:0000250"/>
    <property type="project" value="UniProtKB"/>
</dbReference>
<dbReference type="GO" id="GO:0001738">
    <property type="term" value="P:morphogenesis of a polarized epithelium"/>
    <property type="evidence" value="ECO:0000250"/>
    <property type="project" value="UniProtKB"/>
</dbReference>
<dbReference type="GO" id="GO:0050687">
    <property type="term" value="P:negative regulation of defense response to virus"/>
    <property type="evidence" value="ECO:0000266"/>
    <property type="project" value="RGD"/>
</dbReference>
<dbReference type="GO" id="GO:0032688">
    <property type="term" value="P:negative regulation of interferon-beta production"/>
    <property type="evidence" value="ECO:0000266"/>
    <property type="project" value="RGD"/>
</dbReference>
<dbReference type="GO" id="GO:0031333">
    <property type="term" value="P:negative regulation of protein-containing complex assembly"/>
    <property type="evidence" value="ECO:0000266"/>
    <property type="project" value="RGD"/>
</dbReference>
<dbReference type="GO" id="GO:0045879">
    <property type="term" value="P:negative regulation of smoothened signaling pathway"/>
    <property type="evidence" value="ECO:0000266"/>
    <property type="project" value="RGD"/>
</dbReference>
<dbReference type="GO" id="GO:0032480">
    <property type="term" value="P:negative regulation of type I interferon production"/>
    <property type="evidence" value="ECO:0000266"/>
    <property type="project" value="RGD"/>
</dbReference>
<dbReference type="GO" id="GO:0021532">
    <property type="term" value="P:neural tube patterning"/>
    <property type="evidence" value="ECO:0000266"/>
    <property type="project" value="RGD"/>
</dbReference>
<dbReference type="GO" id="GO:0036342">
    <property type="term" value="P:post-anal tail morphogenesis"/>
    <property type="evidence" value="ECO:0000266"/>
    <property type="project" value="RGD"/>
</dbReference>
<dbReference type="GO" id="GO:0070507">
    <property type="term" value="P:regulation of microtubule cytoskeleton organization"/>
    <property type="evidence" value="ECO:0000250"/>
    <property type="project" value="UniProtKB"/>
</dbReference>
<dbReference type="FunFam" id="1.10.418.50:FF:000001">
    <property type="entry name" value="TRAF3-interacting protein 1 isoform X1"/>
    <property type="match status" value="1"/>
</dbReference>
<dbReference type="Gene3D" id="1.10.418.50">
    <property type="entry name" value="Microtubule-binding protein MIP-T3"/>
    <property type="match status" value="1"/>
</dbReference>
<dbReference type="InterPro" id="IPR018799">
    <property type="entry name" value="TRAF3IP1"/>
</dbReference>
<dbReference type="InterPro" id="IPR041476">
    <property type="entry name" value="TRAF3IP1_C"/>
</dbReference>
<dbReference type="InterPro" id="IPR040468">
    <property type="entry name" value="TRAF3IP1_N"/>
</dbReference>
<dbReference type="InterPro" id="IPR042576">
    <property type="entry name" value="TRAF3IP1_N_sf"/>
</dbReference>
<dbReference type="PANTHER" id="PTHR31363">
    <property type="entry name" value="TRAF3-INTERACTING PROTEIN 1"/>
    <property type="match status" value="1"/>
</dbReference>
<dbReference type="PANTHER" id="PTHR31363:SF0">
    <property type="entry name" value="TRAF3-INTERACTING PROTEIN 1"/>
    <property type="match status" value="1"/>
</dbReference>
<dbReference type="Pfam" id="PF10243">
    <property type="entry name" value="MIP-T3"/>
    <property type="match status" value="1"/>
</dbReference>
<dbReference type="Pfam" id="PF17749">
    <property type="entry name" value="MIP-T3_C"/>
    <property type="match status" value="1"/>
</dbReference>
<comment type="function">
    <text evidence="2 3">Plays an inhibitory role on IL13 signaling by binding to IL13RA1. Involved in suppression of IL13-induced STAT6 phosphorylation, transcriptional activity and DNA-binding. Recruits TRAF3 and DISC1 to the microtubules (By similarity). Involved in kidney development and epithelial morphogenesis. Involved in the regulation of microtubule cytoskeleton organization. Is a negative regulator of microtubule stability, acting through the control of MAP4 levels. Involved in ciliogenesis (By similarity).</text>
</comment>
<comment type="subunit">
    <text evidence="2 3">Component of the IFT complex B, at least composed of IFT20, IFT22, IFT25, IFT27, IFT46, IFT52, TRAF3IP1/IFT54, IFT57, IFT74, IFT80, IFT81, and IFT88. Interacts with IFT88 (By similarity). Interacts with IL13RA1. Binds to microtubules, TRAF3 and DISC1 (By similarity). Interacts with MAP4 (By similarity).</text>
</comment>
<comment type="subcellular location">
    <subcellularLocation>
        <location evidence="3">Cytoplasm</location>
        <location evidence="3">Cytoskeleton</location>
    </subcellularLocation>
    <subcellularLocation>
        <location evidence="3">Cell projection</location>
        <location evidence="3">Cilium</location>
    </subcellularLocation>
    <subcellularLocation>
        <location evidence="2">Cytoplasm</location>
        <location evidence="2">Cytoskeleton</location>
        <location evidence="2">Cilium axoneme</location>
    </subcellularLocation>
    <subcellularLocation>
        <location evidence="2">Cytoplasm</location>
        <location evidence="2">Cytoskeleton</location>
        <location evidence="2">Cilium basal body</location>
    </subcellularLocation>
    <text evidence="3">Microtubules. In the cilium, it is observed at the ciliary base, ciliary transition zone and ciliary tip.</text>
</comment>
<comment type="similarity">
    <text evidence="6">Belongs to the TRAF3IP1 family.</text>
</comment>
<keyword id="KW-0966">Cell projection</keyword>
<keyword id="KW-0969">Cilium</keyword>
<keyword id="KW-0970">Cilium biogenesis/degradation</keyword>
<keyword id="KW-0175">Coiled coil</keyword>
<keyword id="KW-0963">Cytoplasm</keyword>
<keyword id="KW-0206">Cytoskeleton</keyword>
<keyword id="KW-0597">Phosphoprotein</keyword>
<keyword id="KW-1185">Reference proteome</keyword>
<name>MIPT3_RAT</name>
<reference key="1">
    <citation type="journal article" date="2004" name="Genome Res.">
        <title>The status, quality, and expansion of the NIH full-length cDNA project: the Mammalian Gene Collection (MGC).</title>
        <authorList>
            <consortium name="The MGC Project Team"/>
        </authorList>
    </citation>
    <scope>NUCLEOTIDE SEQUENCE [LARGE SCALE MRNA]</scope>
    <source>
        <tissue>Testis</tissue>
    </source>
</reference>
<reference key="2">
    <citation type="journal article" date="2012" name="Nat. Commun.">
        <title>Quantitative maps of protein phosphorylation sites across 14 different rat organs and tissues.</title>
        <authorList>
            <person name="Lundby A."/>
            <person name="Secher A."/>
            <person name="Lage K."/>
            <person name="Nordsborg N.B."/>
            <person name="Dmytriyev A."/>
            <person name="Lundby C."/>
            <person name="Olsen J.V."/>
        </authorList>
    </citation>
    <scope>PHOSPHORYLATION [LARGE SCALE ANALYSIS] AT SER-437</scope>
    <scope>IDENTIFICATION BY MASS SPECTROMETRY [LARGE SCALE ANALYSIS]</scope>
</reference>
<feature type="chain" id="PRO_0000299546" description="TRAF3-interacting protein 1">
    <location>
        <begin position="1"/>
        <end position="653"/>
    </location>
</feature>
<feature type="region of interest" description="Abolishes microtubules binding when missing" evidence="1">
    <location>
        <begin position="1"/>
        <end position="306"/>
    </location>
</feature>
<feature type="region of interest" description="Disordered" evidence="5">
    <location>
        <begin position="134"/>
        <end position="467"/>
    </location>
</feature>
<feature type="region of interest" description="DISC1-interaction domain" evidence="1">
    <location>
        <begin position="229"/>
        <end position="653"/>
    </location>
</feature>
<feature type="coiled-coil region" evidence="4">
    <location>
        <begin position="533"/>
        <end position="628"/>
    </location>
</feature>
<feature type="compositionally biased region" description="Basic and acidic residues" evidence="5">
    <location>
        <begin position="145"/>
        <end position="305"/>
    </location>
</feature>
<feature type="compositionally biased region" description="Basic and acidic residues" evidence="5">
    <location>
        <begin position="325"/>
        <end position="335"/>
    </location>
</feature>
<feature type="compositionally biased region" description="Basic and acidic residues" evidence="5">
    <location>
        <begin position="370"/>
        <end position="384"/>
    </location>
</feature>
<feature type="compositionally biased region" description="Polar residues" evidence="5">
    <location>
        <begin position="448"/>
        <end position="462"/>
    </location>
</feature>
<feature type="modified residue" description="Phosphoserine" evidence="7">
    <location>
        <position position="437"/>
    </location>
</feature>
<sequence>MNAAVVRRTQEALGKVIRRPPLTEKLLNKPPFRYLHDIITEVIRITGFMKGLYTDAEMKSDNVKDKDAKISFLQKAIDVVMMVSGEPLAAKPARIVAGHEPERTNELLQLIGKCCLSKLSSDEAVKRVLAGEKGDSRGRVLRTSKAQEPDNKSVKEEESRTQKEEKRSSEVKERSSSAEHKQKEELKEDSKPREKERDKEKAKEADRDRHREPDRDRNRDGEREKARARAKQDRDRNNKDRDRETERDRDRDRRSDGGKEKERQKDRDRDKGKDRERRKSKNGEHTRDPDREKSRDADKSEKKADISVGASKSSTLKASKRRSKNSLEGRKEDNISAKILDSIVSGLNDEPDQETTAPEIDDNSASLWRENAEPEPAVKQKGDSPSDAEGEAVPTSQDKLEVTENAEVSNELPSSLRRIPRPGSARPAPPRVKRQESTETLAGDRSGSGKTVSTVIIDSQNSDNEDDEQFVVEAAPQLSEIAEIEMVPSGDLEDEEKHGGLVKKILETKKDYEKLQQSPKPGEKERSLIFESAWKKEKDIVSKEIEKLRVSIQTLCKSALPLGKIMDYIQEDVDAMQNELQLWHSENRQHAEALSKEQSITDSAVEPLKAELSELEQQIKDQQDKICAVKANILKNEEKIQKMVHSINLSSRR</sequence>
<proteinExistence type="evidence at protein level"/>
<protein>
    <recommendedName>
        <fullName>TRAF3-interacting protein 1</fullName>
    </recommendedName>
    <alternativeName>
        <fullName>Intraflagellar transport protein 54 homolog</fullName>
    </alternativeName>
    <alternativeName>
        <fullName>Microtubule-interacting protein associated with TRAF3</fullName>
        <shortName>MIP-T3</shortName>
    </alternativeName>
</protein>
<evidence type="ECO:0000250" key="1"/>
<evidence type="ECO:0000250" key="2">
    <source>
        <dbReference type="UniProtKB" id="Q149C2"/>
    </source>
</evidence>
<evidence type="ECO:0000250" key="3">
    <source>
        <dbReference type="UniProtKB" id="Q8TDR0"/>
    </source>
</evidence>
<evidence type="ECO:0000255" key="4"/>
<evidence type="ECO:0000256" key="5">
    <source>
        <dbReference type="SAM" id="MobiDB-lite"/>
    </source>
</evidence>
<evidence type="ECO:0000305" key="6"/>
<evidence type="ECO:0007744" key="7">
    <source>
    </source>
</evidence>
<organism>
    <name type="scientific">Rattus norvegicus</name>
    <name type="common">Rat</name>
    <dbReference type="NCBI Taxonomy" id="10116"/>
    <lineage>
        <taxon>Eukaryota</taxon>
        <taxon>Metazoa</taxon>
        <taxon>Chordata</taxon>
        <taxon>Craniata</taxon>
        <taxon>Vertebrata</taxon>
        <taxon>Euteleostomi</taxon>
        <taxon>Mammalia</taxon>
        <taxon>Eutheria</taxon>
        <taxon>Euarchontoglires</taxon>
        <taxon>Glires</taxon>
        <taxon>Rodentia</taxon>
        <taxon>Myomorpha</taxon>
        <taxon>Muroidea</taxon>
        <taxon>Muridae</taxon>
        <taxon>Murinae</taxon>
        <taxon>Rattus</taxon>
    </lineage>
</organism>
<accession>Q5XIN3</accession>
<gene>
    <name type="primary">Traf3ip1</name>
    <name type="synonym">Ift54</name>
    <name type="synonym">Mipt3</name>
</gene>